<gene>
    <name type="primary">yidC</name>
</gene>
<name>YIDC_PROMI</name>
<accession>P22833</accession>
<protein>
    <recommendedName>
        <fullName>Membrane protein insertase YidC</fullName>
    </recommendedName>
    <alternativeName>
        <fullName>Foldase YidC</fullName>
    </alternativeName>
    <alternativeName>
        <fullName>Membrane integrase YidC</fullName>
    </alternativeName>
    <alternativeName>
        <fullName>Membrane protein YidC</fullName>
    </alternativeName>
</protein>
<feature type="chain" id="PRO_0000124738" description="Membrane protein insertase YidC">
    <location>
        <begin position="1"/>
        <end position="237" status="greater than"/>
    </location>
</feature>
<feature type="transmembrane region" description="Helical" evidence="2">
    <location>
        <begin position="7"/>
        <end position="23"/>
    </location>
</feature>
<feature type="region of interest" description="Disordered" evidence="3">
    <location>
        <begin position="34"/>
        <end position="53"/>
    </location>
</feature>
<feature type="compositionally biased region" description="Polar residues" evidence="3">
    <location>
        <begin position="42"/>
        <end position="53"/>
    </location>
</feature>
<feature type="non-terminal residue">
    <location>
        <position position="237"/>
    </location>
</feature>
<keyword id="KW-1003">Cell membrane</keyword>
<keyword id="KW-0143">Chaperone</keyword>
<keyword id="KW-0472">Membrane</keyword>
<keyword id="KW-0653">Protein transport</keyword>
<keyword id="KW-0812">Transmembrane</keyword>
<keyword id="KW-1133">Transmembrane helix</keyword>
<keyword id="KW-0813">Transport</keyword>
<proteinExistence type="inferred from homology"/>
<organism>
    <name type="scientific">Proteus mirabilis</name>
    <dbReference type="NCBI Taxonomy" id="584"/>
    <lineage>
        <taxon>Bacteria</taxon>
        <taxon>Pseudomonadati</taxon>
        <taxon>Pseudomonadota</taxon>
        <taxon>Gammaproteobacteria</taxon>
        <taxon>Enterobacterales</taxon>
        <taxon>Morganellaceae</taxon>
        <taxon>Proteus</taxon>
    </lineage>
</organism>
<sequence>MDSQRNLLFIALLFVSFLIWQQWEGDKVSQNTTTTTQVSQQADMPSSDSLAVTGNSNEQAKLITVKTDVLDLRINTQGGTIDEADLLAYPAELNSKTPFRLLETTPQFLYQAQSGLIGPDGPDQKSRPVYSATQQEFILGENQDELRVPMTFVNEEGVKFVKTFILKKGQYDIGIEYKVENPTDKTLTMNFYGQLKQSVKLPEHRDTGSSNFALHTYRGAAYSSDETNYKKYSFGDI</sequence>
<dbReference type="EMBL" id="M58352">
    <property type="protein sequence ID" value="AAA83954.1"/>
    <property type="molecule type" value="Genomic_DNA"/>
</dbReference>
<dbReference type="PIR" id="JQ0729">
    <property type="entry name" value="JQ0729"/>
</dbReference>
<dbReference type="SMR" id="P22833"/>
<dbReference type="STRING" id="584.AOUC001_19010"/>
<dbReference type="GO" id="GO:0005886">
    <property type="term" value="C:plasma membrane"/>
    <property type="evidence" value="ECO:0007669"/>
    <property type="project" value="UniProtKB-SubCell"/>
</dbReference>
<dbReference type="GO" id="GO:0032977">
    <property type="term" value="F:membrane insertase activity"/>
    <property type="evidence" value="ECO:0007669"/>
    <property type="project" value="InterPro"/>
</dbReference>
<dbReference type="GO" id="GO:0015031">
    <property type="term" value="P:protein transport"/>
    <property type="evidence" value="ECO:0007669"/>
    <property type="project" value="UniProtKB-KW"/>
</dbReference>
<dbReference type="CDD" id="cd19961">
    <property type="entry name" value="EcYidC-like_peri"/>
    <property type="match status" value="1"/>
</dbReference>
<dbReference type="Gene3D" id="2.70.98.90">
    <property type="match status" value="1"/>
</dbReference>
<dbReference type="InterPro" id="IPR028053">
    <property type="entry name" value="Membr_insert_YidC_N"/>
</dbReference>
<dbReference type="InterPro" id="IPR001708">
    <property type="entry name" value="YidC/ALB3/OXA1/COX18"/>
</dbReference>
<dbReference type="InterPro" id="IPR038221">
    <property type="entry name" value="YidC_periplasmic_sf"/>
</dbReference>
<dbReference type="NCBIfam" id="TIGR03593">
    <property type="entry name" value="yidC_nterm"/>
    <property type="match status" value="1"/>
</dbReference>
<dbReference type="Pfam" id="PF14849">
    <property type="entry name" value="YidC_periplas"/>
    <property type="match status" value="1"/>
</dbReference>
<dbReference type="PRINTS" id="PR00701">
    <property type="entry name" value="60KDINNERMP"/>
</dbReference>
<evidence type="ECO:0000250" key="1"/>
<evidence type="ECO:0000255" key="2"/>
<evidence type="ECO:0000256" key="3">
    <source>
        <dbReference type="SAM" id="MobiDB-lite"/>
    </source>
</evidence>
<evidence type="ECO:0000305" key="4"/>
<comment type="function">
    <text evidence="1">Required for the insertion and/or proper folding and/or complex formation of integral membrane proteins into the membrane. Involved in integration of membrane proteins that insert both dependently and independently of the Sec translocase complex, as well as at least some lipoproteins. Aids folding of multispanning membrane proteins (By similarity).</text>
</comment>
<comment type="subunit">
    <text evidence="1">Interacts with the Sec translocase complex via SecD. Specifically interacts with transmembrane segments of nascent integral membrane proteins during membrane integration (By similarity).</text>
</comment>
<comment type="subcellular location">
    <subcellularLocation>
        <location evidence="1">Cell membrane</location>
        <topology evidence="1">Multi-pass membrane protein</topology>
    </subcellularLocation>
</comment>
<comment type="similarity">
    <text evidence="4">Belongs to the OXA1/ALB3/YidC family. Type 1 subfamily.</text>
</comment>
<reference key="1">
    <citation type="journal article" date="1990" name="Gene">
        <title>Nucleotide sequence of a Proteus mirabilis DNA fragment homologous to the 60K-rnpA-rpmH-dnaA-dnaN-recF-gyrB region of Escherichia coli.</title>
        <authorList>
            <person name="Skovgaard O."/>
        </authorList>
    </citation>
    <scope>NUCLEOTIDE SEQUENCE [GENOMIC DNA]</scope>
    <source>
        <strain>LM1509</strain>
    </source>
</reference>